<name>VPC49_MYCTU</name>
<reference key="1">
    <citation type="journal article" date="1998" name="Nature">
        <title>Deciphering the biology of Mycobacterium tuberculosis from the complete genome sequence.</title>
        <authorList>
            <person name="Cole S.T."/>
            <person name="Brosch R."/>
            <person name="Parkhill J."/>
            <person name="Garnier T."/>
            <person name="Churcher C.M."/>
            <person name="Harris D.E."/>
            <person name="Gordon S.V."/>
            <person name="Eiglmeier K."/>
            <person name="Gas S."/>
            <person name="Barry C.E. III"/>
            <person name="Tekaia F."/>
            <person name="Badcock K."/>
            <person name="Basham D."/>
            <person name="Brown D."/>
            <person name="Chillingworth T."/>
            <person name="Connor R."/>
            <person name="Davies R.M."/>
            <person name="Devlin K."/>
            <person name="Feltwell T."/>
            <person name="Gentles S."/>
            <person name="Hamlin N."/>
            <person name="Holroyd S."/>
            <person name="Hornsby T."/>
            <person name="Jagels K."/>
            <person name="Krogh A."/>
            <person name="McLean J."/>
            <person name="Moule S."/>
            <person name="Murphy L.D."/>
            <person name="Oliver S."/>
            <person name="Osborne J."/>
            <person name="Quail M.A."/>
            <person name="Rajandream M.A."/>
            <person name="Rogers J."/>
            <person name="Rutter S."/>
            <person name="Seeger K."/>
            <person name="Skelton S."/>
            <person name="Squares S."/>
            <person name="Squares R."/>
            <person name="Sulston J.E."/>
            <person name="Taylor K."/>
            <person name="Whitehead S."/>
            <person name="Barrell B.G."/>
        </authorList>
    </citation>
    <scope>NUCLEOTIDE SEQUENCE [LARGE SCALE GENOMIC DNA]</scope>
    <source>
        <strain>ATCC 25618 / H37Rv</strain>
    </source>
</reference>
<reference key="2">
    <citation type="journal article" date="2009" name="PLoS Genet.">
        <title>Comprehensive functional analysis of Mycobacterium tuberculosis toxin-antitoxin systems: implications for pathogenesis, stress responses, and evolution.</title>
        <authorList>
            <person name="Ramage H.R."/>
            <person name="Connolly L.E."/>
            <person name="Cox J.S."/>
        </authorList>
    </citation>
    <scope>POSSIBLE FUNCTION</scope>
    <source>
        <strain>ATCC 35801 / TMC 107 / Erdman</strain>
    </source>
</reference>
<reference key="3">
    <citation type="journal article" date="2011" name="MBio">
        <title>Characterization and transcriptome analysis of Mycobacterium tuberculosis persisters.</title>
        <authorList>
            <person name="Keren I."/>
            <person name="Minami S."/>
            <person name="Rubin E."/>
            <person name="Lewis K."/>
        </authorList>
    </citation>
    <scope>INDUCTION IN PERSISTER CELLS</scope>
    <source>
        <strain>ATCC 25618 / H37Rv</strain>
    </source>
</reference>
<reference key="4">
    <citation type="journal article" date="2011" name="Mol. Cell. Proteomics">
        <title>Proteogenomic analysis of Mycobacterium tuberculosis by high resolution mass spectrometry.</title>
        <authorList>
            <person name="Kelkar D.S."/>
            <person name="Kumar D."/>
            <person name="Kumar P."/>
            <person name="Balakrishnan L."/>
            <person name="Muthusamy B."/>
            <person name="Yadav A.K."/>
            <person name="Shrivastava P."/>
            <person name="Marimuthu A."/>
            <person name="Anand S."/>
            <person name="Sundaram H."/>
            <person name="Kingsbury R."/>
            <person name="Harsha H.C."/>
            <person name="Nair B."/>
            <person name="Prasad T.S."/>
            <person name="Chauhan D.S."/>
            <person name="Katoch K."/>
            <person name="Katoch V.M."/>
            <person name="Kumar P."/>
            <person name="Chaerkady R."/>
            <person name="Ramachandran S."/>
            <person name="Dash D."/>
            <person name="Pandey A."/>
        </authorList>
    </citation>
    <scope>IDENTIFICATION BY MASS SPECTROMETRY [LARGE SCALE ANALYSIS]</scope>
    <source>
        <strain>ATCC 25618 / H37Rv</strain>
    </source>
</reference>
<reference key="5">
    <citation type="journal article" date="2014" name="Toxins">
        <title>Multiple toxin-antitoxin systems in Mycobacterium tuberculosis.</title>
        <authorList>
            <person name="Sala A."/>
            <person name="Bordes P."/>
            <person name="Genevaux P."/>
        </authorList>
    </citation>
    <scope>GENE NAME</scope>
    <scope>DISCUSSION OF FUNCTION</scope>
    <scope>REVIEW</scope>
    <source>
        <strain>ATCC 25618 / H37Rv</strain>
    </source>
</reference>
<sequence length="144" mass="15205">MPLVYFDASAFVKLLTTETGSSLASALWDGCDAALSSRLAYPEVRAALAAAARNHDLTESELADAERDWEDFWAATRPVELTATVEQHAGHLARAHALRGADAVHLASALAVGDPGLVVAVWDRRLHTGAHAAGCRVAPAQLDP</sequence>
<protein>
    <recommendedName>
        <fullName evidence="1 3">Ribonuclease VapC49</fullName>
        <shortName evidence="1">RNase VapC49</shortName>
        <ecNumber evidence="1">3.1.-.-</ecNumber>
    </recommendedName>
    <alternativeName>
        <fullName evidence="1">Toxin VapC49</fullName>
    </alternativeName>
</protein>
<feature type="chain" id="PRO_0000407897" description="Ribonuclease VapC49">
    <location>
        <begin position="1"/>
        <end position="144"/>
    </location>
</feature>
<feature type="binding site" evidence="1">
    <location>
        <position position="7"/>
    </location>
    <ligand>
        <name>Mg(2+)</name>
        <dbReference type="ChEBI" id="CHEBI:18420"/>
    </ligand>
</feature>
<feature type="binding site" evidence="1">
    <location>
        <position position="102"/>
    </location>
    <ligand>
        <name>Mg(2+)</name>
        <dbReference type="ChEBI" id="CHEBI:18420"/>
    </ligand>
</feature>
<comment type="function">
    <text evidence="1">Toxic component of a type II toxin-antitoxin (TA) system. An RNase. Its cognate antitoxin is VapB49 (By similarity).</text>
</comment>
<comment type="cofactor">
    <cofactor evidence="1">
        <name>Mg(2+)</name>
        <dbReference type="ChEBI" id="CHEBI:18420"/>
    </cofactor>
</comment>
<comment type="induction">
    <text evidence="2">Induced in persister cells in response to D-cycloserine.</text>
</comment>
<comment type="similarity">
    <text evidence="1">Belongs to the PINc/VapC protein family.</text>
</comment>
<proteinExistence type="evidence at protein level"/>
<dbReference type="EC" id="3.1.-.-" evidence="1"/>
<dbReference type="EMBL" id="AL123456">
    <property type="protein sequence ID" value="CCP45991.1"/>
    <property type="molecule type" value="Genomic_DNA"/>
</dbReference>
<dbReference type="PIR" id="B70949">
    <property type="entry name" value="B70949"/>
</dbReference>
<dbReference type="RefSeq" id="NP_217696.1">
    <property type="nucleotide sequence ID" value="NC_000962.3"/>
</dbReference>
<dbReference type="RefSeq" id="WP_003899952.1">
    <property type="nucleotide sequence ID" value="NZ_NVQJ01000019.1"/>
</dbReference>
<dbReference type="SMR" id="P9WF51"/>
<dbReference type="STRING" id="83332.Rv3180c"/>
<dbReference type="PaxDb" id="83332-Rv3180c"/>
<dbReference type="DNASU" id="887946"/>
<dbReference type="GeneID" id="887946"/>
<dbReference type="KEGG" id="mtu:Rv3180c"/>
<dbReference type="KEGG" id="mtv:RVBD_3180c"/>
<dbReference type="TubercuList" id="Rv3180c"/>
<dbReference type="eggNOG" id="COG1848">
    <property type="taxonomic scope" value="Bacteria"/>
</dbReference>
<dbReference type="InParanoid" id="P9WF51"/>
<dbReference type="OrthoDB" id="1525146at2"/>
<dbReference type="Proteomes" id="UP000001584">
    <property type="component" value="Chromosome"/>
</dbReference>
<dbReference type="GO" id="GO:0000287">
    <property type="term" value="F:magnesium ion binding"/>
    <property type="evidence" value="ECO:0007669"/>
    <property type="project" value="UniProtKB-UniRule"/>
</dbReference>
<dbReference type="GO" id="GO:0004540">
    <property type="term" value="F:RNA nuclease activity"/>
    <property type="evidence" value="ECO:0007669"/>
    <property type="project" value="InterPro"/>
</dbReference>
<dbReference type="CDD" id="cd09874">
    <property type="entry name" value="PIN_MT3492-like"/>
    <property type="match status" value="1"/>
</dbReference>
<dbReference type="Gene3D" id="3.40.50.1010">
    <property type="entry name" value="5'-nuclease"/>
    <property type="match status" value="1"/>
</dbReference>
<dbReference type="HAMAP" id="MF_00265">
    <property type="entry name" value="VapC_Nob1"/>
    <property type="match status" value="1"/>
</dbReference>
<dbReference type="InterPro" id="IPR029060">
    <property type="entry name" value="PIN-like_dom_sf"/>
</dbReference>
<dbReference type="InterPro" id="IPR002716">
    <property type="entry name" value="PIN_dom"/>
</dbReference>
<dbReference type="InterPro" id="IPR022907">
    <property type="entry name" value="VapC_family"/>
</dbReference>
<dbReference type="Pfam" id="PF01850">
    <property type="entry name" value="PIN"/>
    <property type="match status" value="1"/>
</dbReference>
<dbReference type="SUPFAM" id="SSF88723">
    <property type="entry name" value="PIN domain-like"/>
    <property type="match status" value="1"/>
</dbReference>
<evidence type="ECO:0000255" key="1">
    <source>
        <dbReference type="HAMAP-Rule" id="MF_00265"/>
    </source>
</evidence>
<evidence type="ECO:0000269" key="2">
    <source>
    </source>
</evidence>
<evidence type="ECO:0000303" key="3">
    <source>
    </source>
</evidence>
<gene>
    <name evidence="1 3" type="primary">vapC49</name>
    <name type="ordered locus">Rv3180c</name>
</gene>
<organism>
    <name type="scientific">Mycobacterium tuberculosis (strain ATCC 25618 / H37Rv)</name>
    <dbReference type="NCBI Taxonomy" id="83332"/>
    <lineage>
        <taxon>Bacteria</taxon>
        <taxon>Bacillati</taxon>
        <taxon>Actinomycetota</taxon>
        <taxon>Actinomycetes</taxon>
        <taxon>Mycobacteriales</taxon>
        <taxon>Mycobacteriaceae</taxon>
        <taxon>Mycobacterium</taxon>
        <taxon>Mycobacterium tuberculosis complex</taxon>
    </lineage>
</organism>
<keyword id="KW-0378">Hydrolase</keyword>
<keyword id="KW-0460">Magnesium</keyword>
<keyword id="KW-0479">Metal-binding</keyword>
<keyword id="KW-0540">Nuclease</keyword>
<keyword id="KW-1185">Reference proteome</keyword>
<keyword id="KW-1277">Toxin-antitoxin system</keyword>
<accession>P9WF51</accession>
<accession>L0TDD5</accession>
<accession>O53330</accession>
<accession>Q7D5Z6</accession>